<accession>P0A4C3</accession>
<accession>Q9WW37</accession>
<organism>
    <name type="scientific">Streptococcus pneumoniae serotype 4 (strain ATCC BAA-334 / TIGR4)</name>
    <dbReference type="NCBI Taxonomy" id="170187"/>
    <lineage>
        <taxon>Bacteria</taxon>
        <taxon>Bacillati</taxon>
        <taxon>Bacillota</taxon>
        <taxon>Bacilli</taxon>
        <taxon>Lactobacillales</taxon>
        <taxon>Streptococcaceae</taxon>
        <taxon>Streptococcus</taxon>
    </lineage>
</organism>
<name>RS3_STRPN</name>
<evidence type="ECO:0000255" key="1">
    <source>
        <dbReference type="HAMAP-Rule" id="MF_01309"/>
    </source>
</evidence>
<evidence type="ECO:0000305" key="2"/>
<sequence length="217" mass="24046">MGQKVHPIGMRVGIIRDWDAKWYAEKEYADYLHEDLAIRKFVQKELADAAVSTIEIERAVNKVNVSLHTAKPGMVIGKGGANVDALRAKLNKLTGKQVHINIIEIKQPDLDAHLVGEGIARQLEQRVAFRRAQKQAIQRAMRAGAKGIKTQVSGRLNGADIARAEGYSEGTVPLHTLRADIDYAWEEADTTYGKLGVKVWIYRGEVLPARKNTKGGK</sequence>
<feature type="chain" id="PRO_0000130208" description="Small ribosomal subunit protein uS3">
    <location>
        <begin position="1"/>
        <end position="217"/>
    </location>
</feature>
<feature type="domain" description="KH type-2" evidence="1">
    <location>
        <begin position="38"/>
        <end position="106"/>
    </location>
</feature>
<gene>
    <name evidence="1" type="primary">rpsC</name>
    <name type="ordered locus">SP_0215</name>
</gene>
<dbReference type="EMBL" id="AF126060">
    <property type="protein sequence ID" value="AAD33271.1"/>
    <property type="status" value="ALT_INIT"/>
    <property type="molecule type" value="Genomic_DNA"/>
</dbReference>
<dbReference type="EMBL" id="AF126061">
    <property type="protein sequence ID" value="AAD33280.1"/>
    <property type="status" value="ALT_INIT"/>
    <property type="molecule type" value="Genomic_DNA"/>
</dbReference>
<dbReference type="EMBL" id="AE005672">
    <property type="protein sequence ID" value="AAK74395.1"/>
    <property type="molecule type" value="Genomic_DNA"/>
</dbReference>
<dbReference type="PIR" id="B95025">
    <property type="entry name" value="B95025"/>
</dbReference>
<dbReference type="RefSeq" id="WP_000529936.1">
    <property type="nucleotide sequence ID" value="NZ_CP155539.1"/>
</dbReference>
<dbReference type="SMR" id="P0A4C3"/>
<dbReference type="PaxDb" id="170187-SP_0215"/>
<dbReference type="EnsemblBacteria" id="AAK74395">
    <property type="protein sequence ID" value="AAK74395"/>
    <property type="gene ID" value="SP_0215"/>
</dbReference>
<dbReference type="GeneID" id="49600535"/>
<dbReference type="KEGG" id="spn:SP_0215"/>
<dbReference type="eggNOG" id="COG0092">
    <property type="taxonomic scope" value="Bacteria"/>
</dbReference>
<dbReference type="PhylomeDB" id="P0A4C3"/>
<dbReference type="BioCyc" id="SPNE170187:G1FZB-220-MONOMER"/>
<dbReference type="Proteomes" id="UP000000585">
    <property type="component" value="Chromosome"/>
</dbReference>
<dbReference type="GO" id="GO:0022627">
    <property type="term" value="C:cytosolic small ribosomal subunit"/>
    <property type="evidence" value="ECO:0007669"/>
    <property type="project" value="TreeGrafter"/>
</dbReference>
<dbReference type="GO" id="GO:0003729">
    <property type="term" value="F:mRNA binding"/>
    <property type="evidence" value="ECO:0007669"/>
    <property type="project" value="UniProtKB-UniRule"/>
</dbReference>
<dbReference type="GO" id="GO:0019843">
    <property type="term" value="F:rRNA binding"/>
    <property type="evidence" value="ECO:0007669"/>
    <property type="project" value="UniProtKB-UniRule"/>
</dbReference>
<dbReference type="GO" id="GO:0003735">
    <property type="term" value="F:structural constituent of ribosome"/>
    <property type="evidence" value="ECO:0007669"/>
    <property type="project" value="InterPro"/>
</dbReference>
<dbReference type="GO" id="GO:0006412">
    <property type="term" value="P:translation"/>
    <property type="evidence" value="ECO:0007669"/>
    <property type="project" value="UniProtKB-UniRule"/>
</dbReference>
<dbReference type="CDD" id="cd02412">
    <property type="entry name" value="KH-II_30S_S3"/>
    <property type="match status" value="1"/>
</dbReference>
<dbReference type="FunFam" id="3.30.1140.32:FF:000001">
    <property type="entry name" value="30S ribosomal protein S3"/>
    <property type="match status" value="1"/>
</dbReference>
<dbReference type="FunFam" id="3.30.300.20:FF:000001">
    <property type="entry name" value="30S ribosomal protein S3"/>
    <property type="match status" value="1"/>
</dbReference>
<dbReference type="Gene3D" id="3.30.300.20">
    <property type="match status" value="1"/>
</dbReference>
<dbReference type="Gene3D" id="3.30.1140.32">
    <property type="entry name" value="Ribosomal protein S3, C-terminal domain"/>
    <property type="match status" value="1"/>
</dbReference>
<dbReference type="HAMAP" id="MF_01309_B">
    <property type="entry name" value="Ribosomal_uS3_B"/>
    <property type="match status" value="1"/>
</dbReference>
<dbReference type="InterPro" id="IPR004087">
    <property type="entry name" value="KH_dom"/>
</dbReference>
<dbReference type="InterPro" id="IPR015946">
    <property type="entry name" value="KH_dom-like_a/b"/>
</dbReference>
<dbReference type="InterPro" id="IPR004044">
    <property type="entry name" value="KH_dom_type_2"/>
</dbReference>
<dbReference type="InterPro" id="IPR009019">
    <property type="entry name" value="KH_sf_prok-type"/>
</dbReference>
<dbReference type="InterPro" id="IPR036419">
    <property type="entry name" value="Ribosomal_S3_C_sf"/>
</dbReference>
<dbReference type="InterPro" id="IPR005704">
    <property type="entry name" value="Ribosomal_uS3_bac-typ"/>
</dbReference>
<dbReference type="InterPro" id="IPR001351">
    <property type="entry name" value="Ribosomal_uS3_C"/>
</dbReference>
<dbReference type="InterPro" id="IPR018280">
    <property type="entry name" value="Ribosomal_uS3_CS"/>
</dbReference>
<dbReference type="NCBIfam" id="TIGR01009">
    <property type="entry name" value="rpsC_bact"/>
    <property type="match status" value="1"/>
</dbReference>
<dbReference type="PANTHER" id="PTHR11760">
    <property type="entry name" value="30S/40S RIBOSOMAL PROTEIN S3"/>
    <property type="match status" value="1"/>
</dbReference>
<dbReference type="PANTHER" id="PTHR11760:SF19">
    <property type="entry name" value="SMALL RIBOSOMAL SUBUNIT PROTEIN US3C"/>
    <property type="match status" value="1"/>
</dbReference>
<dbReference type="Pfam" id="PF07650">
    <property type="entry name" value="KH_2"/>
    <property type="match status" value="1"/>
</dbReference>
<dbReference type="Pfam" id="PF00189">
    <property type="entry name" value="Ribosomal_S3_C"/>
    <property type="match status" value="1"/>
</dbReference>
<dbReference type="SMART" id="SM00322">
    <property type="entry name" value="KH"/>
    <property type="match status" value="1"/>
</dbReference>
<dbReference type="SUPFAM" id="SSF54814">
    <property type="entry name" value="Prokaryotic type KH domain (KH-domain type II)"/>
    <property type="match status" value="1"/>
</dbReference>
<dbReference type="SUPFAM" id="SSF54821">
    <property type="entry name" value="Ribosomal protein S3 C-terminal domain"/>
    <property type="match status" value="1"/>
</dbReference>
<dbReference type="PROSITE" id="PS50823">
    <property type="entry name" value="KH_TYPE_2"/>
    <property type="match status" value="1"/>
</dbReference>
<dbReference type="PROSITE" id="PS00548">
    <property type="entry name" value="RIBOSOMAL_S3"/>
    <property type="match status" value="1"/>
</dbReference>
<protein>
    <recommendedName>
        <fullName evidence="1">Small ribosomal subunit protein uS3</fullName>
    </recommendedName>
    <alternativeName>
        <fullName evidence="2">30S ribosomal protein S3</fullName>
    </alternativeName>
</protein>
<reference key="1">
    <citation type="journal article" date="2000" name="Antimicrob. Agents Chemother.">
        <title>Mutations in ribosomal protein L16 conferring reduced susceptibility to evernimicin (SCH27899): implications for mechanism of action.</title>
        <authorList>
            <person name="Adrian P.V."/>
            <person name="Zhao W."/>
            <person name="Black T.A."/>
            <person name="Shaw K.J."/>
            <person name="Hare R.S."/>
            <person name="Klugman K.P."/>
        </authorList>
    </citation>
    <scope>NUCLEOTIDE SEQUENCE [GENOMIC DNA]</scope>
    <source>
        <strain>SP#5</strain>
        <strain>ZR1</strain>
    </source>
</reference>
<reference key="2">
    <citation type="journal article" date="2001" name="Science">
        <title>Complete genome sequence of a virulent isolate of Streptococcus pneumoniae.</title>
        <authorList>
            <person name="Tettelin H."/>
            <person name="Nelson K.E."/>
            <person name="Paulsen I.T."/>
            <person name="Eisen J.A."/>
            <person name="Read T.D."/>
            <person name="Peterson S.N."/>
            <person name="Heidelberg J.F."/>
            <person name="DeBoy R.T."/>
            <person name="Haft D.H."/>
            <person name="Dodson R.J."/>
            <person name="Durkin A.S."/>
            <person name="Gwinn M.L."/>
            <person name="Kolonay J.F."/>
            <person name="Nelson W.C."/>
            <person name="Peterson J.D."/>
            <person name="Umayam L.A."/>
            <person name="White O."/>
            <person name="Salzberg S.L."/>
            <person name="Lewis M.R."/>
            <person name="Radune D."/>
            <person name="Holtzapple E.K."/>
            <person name="Khouri H.M."/>
            <person name="Wolf A.M."/>
            <person name="Utterback T.R."/>
            <person name="Hansen C.L."/>
            <person name="McDonald L.A."/>
            <person name="Feldblyum T.V."/>
            <person name="Angiuoli S.V."/>
            <person name="Dickinson T."/>
            <person name="Hickey E.K."/>
            <person name="Holt I.E."/>
            <person name="Loftus B.J."/>
            <person name="Yang F."/>
            <person name="Smith H.O."/>
            <person name="Venter J.C."/>
            <person name="Dougherty B.A."/>
            <person name="Morrison D.A."/>
            <person name="Hollingshead S.K."/>
            <person name="Fraser C.M."/>
        </authorList>
    </citation>
    <scope>NUCLEOTIDE SEQUENCE [LARGE SCALE GENOMIC DNA]</scope>
    <source>
        <strain>ATCC BAA-334 / TIGR4</strain>
    </source>
</reference>
<keyword id="KW-1185">Reference proteome</keyword>
<keyword id="KW-0687">Ribonucleoprotein</keyword>
<keyword id="KW-0689">Ribosomal protein</keyword>
<keyword id="KW-0694">RNA-binding</keyword>
<keyword id="KW-0699">rRNA-binding</keyword>
<comment type="function">
    <text evidence="1">Binds the lower part of the 30S subunit head. Binds mRNA in the 70S ribosome, positioning it for translation.</text>
</comment>
<comment type="subunit">
    <text evidence="1">Part of the 30S ribosomal subunit. Forms a tight complex with proteins S10 and S14.</text>
</comment>
<comment type="similarity">
    <text evidence="1">Belongs to the universal ribosomal protein uS3 family.</text>
</comment>
<comment type="sequence caution" evidence="2">
    <conflict type="erroneous initiation">
        <sequence resource="EMBL-CDS" id="AAD33271"/>
    </conflict>
</comment>
<comment type="sequence caution" evidence="2">
    <conflict type="erroneous initiation">
        <sequence resource="EMBL-CDS" id="AAD33280"/>
    </conflict>
</comment>
<proteinExistence type="inferred from homology"/>